<name>R1A_CVMA5</name>
<reference key="1">
    <citation type="journal article" date="1994" name="Virology">
        <title>Mouse hepatitis virus strain A59 RNA polymerase gene ORF 1a: heterogeneity among MHV strains.</title>
        <authorList>
            <person name="Bonilla P.J."/>
            <person name="Gorbalenya A.E."/>
            <person name="Weiss S.R."/>
        </authorList>
    </citation>
    <scope>NUCLEOTIDE SEQUENCE [GENOMIC RNA]</scope>
</reference>
<reference key="2">
    <citation type="journal article" date="1997" name="Virology">
        <title>Altered pathogenesis of a mutant of the murine coronavirus MHV-A59 is associated with a Q159L amino acid substitution in the spike protein.</title>
        <authorList>
            <person name="Leparc-Goffart I."/>
            <person name="Hingley S.T."/>
            <person name="Chua M.M."/>
            <person name="Jiang X."/>
            <person name="Lavi E."/>
            <person name="Weiss S.R."/>
        </authorList>
    </citation>
    <scope>NUCLEOTIDE SEQUENCE [GENOMIC RNA]</scope>
    <source>
        <strain>Isolate C12 mutant</strain>
    </source>
</reference>
<reference key="3">
    <citation type="journal article" date="1989" name="Virology">
        <title>Molecular cloning of the gene encoding the putative polymerase of mouse hepatitis coronavirus, strain A59.</title>
        <authorList>
            <person name="Pachuk C.J."/>
            <person name="Bredenbeek P.J."/>
            <person name="Zoltick P.W."/>
            <person name="Spaan W.J.M."/>
            <person name="Weiss S.R."/>
        </authorList>
    </citation>
    <scope>NUCLEOTIDE SEQUENCE [GENOMIC RNA] OF 1-597</scope>
</reference>
<reference key="4">
    <citation type="journal article" date="1998" name="J. Virol.">
        <title>Mouse hepatitis virus 3C-like protease cleaves a 22-kilodalton protein from the open reading frame 1a polyprotein in virus-infected cells and in vitro.</title>
        <authorList>
            <person name="Lu X.T."/>
            <person name="Sims A.C."/>
            <person name="Denison M.R."/>
        </authorList>
    </citation>
    <scope>PROTEOLYTIC PROCESSING OF POLYPROTEIN</scope>
    <scope>CHARACTERIZATION OF NSP8</scope>
</reference>
<reference key="5">
    <citation type="journal article" date="1999" name="Virology">
        <title>Further requirements for cleavage by the murine coronavirus 3C-like proteinase: identification of a cleavage site within ORF1b.</title>
        <authorList>
            <person name="Pinon J.D."/>
            <person name="Teng H."/>
            <person name="Weiss S.R."/>
        </authorList>
    </citation>
    <scope>PROTEOLYTIC PROCESSING OF POLYPROTEIN</scope>
    <scope>MUTAGENESIS OF PHE-3331; LEU-3332; GLN-3333; SER-3334; GLY-3335; ILE-3336 AND CYS-3478</scope>
</reference>
<reference key="6">
    <citation type="journal article" date="2000" name="J. Virol.">
        <title>Four proteins processed from the replicase gene polyprotein of mouse hepatitis virus colocalize in the cell periphery and adjacent to sites of virion assembly.</title>
        <authorList>
            <person name="Bost A.G."/>
            <person name="Carnahan R.H."/>
            <person name="Lu X.T."/>
            <person name="Denison M.R."/>
        </authorList>
    </citation>
    <scope>PROTEOLYTIC PROCESSING OF POLYPROTEIN</scope>
    <scope>CHARACTERIZATION OF NSP7; NSP9 AND NSP10</scope>
</reference>
<sequence>MAKMGKYGLGFKWAPEFPWMLPNASEKLGNPERSEEDGFCPSAAQEPKVKGKTLVNHVRVNCSRLPALECCVQSAIIRDIFVDEDPQKVEASTMMALQFGSAVLVKPSKRLSIQAWTNLGVLPKTAAMGLFKRVCLCNTRECSCDAHVAFHLFTVQPDGVCLGNGRFIGWFVPVTAIPEYAKQWLQPWSILLRKGGNKGSVTSGHFRRAVTMPVYDFNVEDACEEVHLNPKGKYSCKAYALLKGYRGVKPILFVDQYGCDYTGCLAKGLEDYGDLTLSEMKELFPVWRDSLDSEVLVAWHVDRDPRAAMRLQTLATVRCIDYVGQPTEDVVDGDVVVREPAHLLAANAIVKRLPRLVETMLYTDSSVTEFCYKTKLCECGFITQFGYVDCCGDTCDFRGWVAGNMMDGFPCPGCTKNYMPWELEAQSSGVIPEGGVLFTQSTDTVNRESFKLYGHAVVPFGSAVYWSPCPGMWLPVIWSSVKSYSGLTYTGVVGCKAIVQETDAICRSLYMDYVQHKCGNLEQRAILGLDDVYHRQLLVNRGDYSLLLENVDLFVKRRAEFACKFATCGDGLVPLLLDGLVPRSYYLIKSGQAFTSMMVNFSHEVTDMCMDMALLFMHDVKVATKYVKKVTGKLAVRFKALGVAVVRKITEWFDLAVDIAASAAGWLCYQLVNGLFAVANGVITFVQEVPELVKNFVDKFKAFFKVLIDSMSVSILSGLTVVKTASNRVCLAGSKVYEVVQKSLSAYVMPVGCSEATCLVGEIEPAVFEDDVVDVVKAPLTYQGCCKPPTSFEKICIVDKLYMAKCGDQFYPVVVDNDTVGVLDQCWRFPCAGKKVEFNDKPKVRKIPSTRKIKITFALDATFDSVLSKACSEFEVDKDVTLDELLDVVLDAVESTLSPCKEHDVIGTKVCALLDRLAGDYVYLFDEGGDEVIAPRMYCSFSAPDDEDCVAADVVDADENQDDDAEDSAVLVADTQEEDGVAKGQVEADSEICVAHTGSQEELAEPDAVGSQTPIASAEETEVGEASDREGIAEAKATVCADAVDACPDQVEAFEIEKVEDSILDELQTELNAPADKTYEDVLAFDAVCSEALSAFYAVPSDETHFKVCGFYSPAIERTNCWLRSTLIVMQSLPLEFKDLEMQKLWLSYKAGYDQCFVDKLVKSVPKSIILPQGGYVADFAYFFLSQCSFKAYANWRCLECDMELKLQGLDAMFFYGDVVSHMCKCGNSMTLLSADIPYTLHFGVRDDKFCAFYTPRKVFRAACAVDVNDCHSMAVVEGKQIDGKVVTKFIGDKFDFMVGYGMTFSMSPFELAQLYGSCITPNVCFVKGDVIKVVRLVNAEVIVNPANGRMAHGAGVAGAIAEKAGSAFIKETSDMVKAQGVCQVGECYESAGGKLCKKVLNIVGPDARGHGKQCYSLLERAYQHINKCDNVVTTLISAGIFSVPTDVSLTYLLGVVTKNVILVSNNQDDFDVIEKCQVTSVAGTKALSLQLAKNLCRDVKFVTNACSSLFSESCFVSSYDVLQEVEALRHDIQLDDDARVFVQANMDCLPTDWRLVNKFDSVDGVRTIKYFECPGGIFVSSQGKKFGYVQNGSFKEASVSQIRALLANKVDVLCTVDGVNFRSCCVAEGEVFGKTLGSVFCDGINVTKVRCSAIYKGKVFFQYSDLSEADLVAVKDAFGFDEPQLLKYYTMLGMCKWPVVVCGNYFAFKQSNNNCYINVACLMLQHLSLKFPKWQWQEAWNEFRSGKPLRFVSLVLAKGSFKFNEPSDSIDFMRVVLREADLSGATCNLEFVCKCGVKQEQRKGVDAVMHFGTLDKGDLVRGYNIACTCGSKLVHCTQFNVPFLICSNTPEGRKLPDDVVAANIFTGGSVGHYTHVKCKPKYQLYDACNVNKVSEAKGNFTDCLYLKNLKQTFSSVLTTFYLDDVKCVEYKPDLSQYYCESGKYYTKPIIKAQFRTFEKVDGVYTNFKLVGHSIAEKLNAKLGFDCNSPFVEYKITEWPTATGDVVLASDDLYVSRYSSGCITFGKPVVWLGHEEASLKSLTYFNRPSVVCENKFNVLPVDVSEPTDKGPVPAAVLVTGVPGADASAGAGIAKEQKACASASVEDQVVTEVRQEPSVSAADVKEVKLNGVKKPVKVEGSVVVNDPTSETKVVKSLSIVDVYDMFLTGCKYVVWTANELSRLVNSPTVREYVKWGMGKIVTPAKLLLLRDEKQEFVAPKVVKAKAIACYCAVKWFLLYCFSWIKFNTDNKVIYTTEVASKLTFKLCCLAFKNALQTFNWSVVSRGFFLVATVFLLWFNFLYANVILSDFYLPNIGPLPTFVGQIVAWFKTTFGVSTICDFYQVTDLGYRSSFCNGSMVCELCFSGFDMLDNYDAINVVQHVVDRRLSFDYISLFKLVVELVIGYSLYTVCFYPLFVLIGMQLLTTWLPEFFMLETMHWSARLFVFVANMLPAFTLLRFYIVVTAMYKVYCLCRHVMYGCSKPGCLFCYKRNRSVRVKCSTVVGGSLRYYDVMANGGTGFCTKHQWNCLNCNSWKPGNTFITHEAAADLSKELKRPVNPTDSAYYSVTEVKQVGCSMRLFYERDGQRVYDDVNASLFVDMNGLLHSKVKGVPETHVVVVENEADKAGFLGAAVFYAQSLYRPMLMVEKKLITTANTGLSVSRTMFDLYVDSLLNVLDVDRKSLTSFVNAAHNSLKEGVQLEQVMDTFIGCARRKCAIDSDVETKSITKSVMSAVNAGVDFTDESCNNLVPTYVKSDTIVAADLGVLIQNNAKHVQANVAKAANVACIWSVDAFNQLSADLQHRLRKACSKTGLKIKLTYNKQEANVPILTTPFSLKGGAVFSRMLQWLFVANLICFIVLWALMPTYAVHKSDMQLPLYASFKVIDNGVLRDVSVTDACFANKFNQFDQWYESTFGLAYYRNSKACPVVVAVIDQDIGHTLFNVPTTVLRYGFHVLHFITHAFATDSVQCYTPHMQIPYDNFYASGCVLSSLCTMLAHADGTPHPYCYTGGVMHNASLYSSLAPHVRYNLASSNGYIRFPEVVSEGIVRVVRTRSMTYCRVGLCEEAEEGICFNFNRSWVLNNPYYRAMPGTFCGRNAFDLIHQVLGGLVRPIDFFALTASSVAGAILAIIVVLAFYYLIKLKRAFGDYTSVVVINVIVWCINFLMLFVFQVYPTLSCLYACFYFYTTLYFPSEISVVMHLQWLVMYGAIMPLWFCIIYVAVVVSNHALWLFSYCRKIGTEVRSDGTFEEMALTTFMITKESYCKLKNSVSDVAFNRYLSLYNKYRYFSGKMDTAAYREAACSQLAKAMETFNHNNGNDVLYQPPTASVTTSFLQSGIVKMVSPTSKVEPCIVSVTYGNMTLNGLWLDDKVYCPRHVICSSADMTDPDYPNLLCRVTSSDFCVMSGRMSLTVMSYQMQGCQLVLTVTLQNPNTPKYSFGVVKPGETFTVLAAYNGRPQGAFHVTLRSSHTIKGSFLCGSCGSVGYVLTGDSVRFVYMHQLELSTGCHTGTDFSGNFYGPYRDAQVVQLPVQDYTQTVNVVAWLYAAIFNRCNWFVQSDSCSLEEFNVWAMTNGFSSIKADLVLDALASMTGVTVEQVLAAIKRLHSGFQGKQILGSCVLEDETPSDVYQQLAGVKLQSKRTRVIKGTCCWILASTFLFCSIISAFVKWTMFMYVTTHMLGVTLCALCFVSFAMLLIKHKHLYLTMYIMPVLCTFYTNYLVVYKQSFRGLAYAWLSHFVPAVDYTYMDEVLYGVVLLVAMVFVTMRSINHDVFSIMFLVGRLVSLVSMWYFGANLEEEVLLFLTSLFGTYTWTTMLSLATAKVIAKWLAVNVLYFTDVPQIKLVLLSYLCIGYVCCCYWGILSLLNSIFRMPLGVYNYKISVQELRYMNANGLRPPRNSFEALMLNFKLLGIGGVPVIEVSQIQSRLTDVKCANVVLLNCLQHLHIASNSKLWQYCSTLHNEILATSDLSMAFDKLAQLLVVLFANPAAVDSKCLASIEEVSDDYVRDNTVLQALQSEFVNMASFVEYELAKKNLDEAKASGSANQQQIKQLEKACNIAKSAYERDRAVARKLERMADLALTNMYKEARINDKKSKVVSALQTMLFSMVRKLDNQALNSILDNAVKGCVPLNAIPSLTSNTLTIIVPDKQVFDQVVDNVYVTYAGNVWHIQFIQDADGAVKQLNEIDVNSTWPLVIAANRHNEVSTVVLQNNELMPQKLRTQVVNSGSDMNCNTPTQCYYNTTGTGKIVYAILSDCDGLKYTKIVKEDGNCVVLELDPPCKFSVQDVKGLKIKYLYFVKGCNTLARGWVVGTLSSTVRLQAGTATEYASNSAILSLCAFSVDPKKTYLDYIKQGGVPVTNCVKMLCDHAGTGMAITIKPEATTNQDSYGGASVCIYCRSRVEHPDVDGLCKLRGKFVQVPLGIKDPVSYVLTHDVCQVCGFWRDGSCSCVGTGSQFQSKDTNFLNGFGVQV</sequence>
<keyword id="KW-0002">3D-structure</keyword>
<keyword id="KW-1072">Activation of host autophagy by virus</keyword>
<keyword id="KW-1132">Decay of host mRNAs by virus</keyword>
<keyword id="KW-1015">Disulfide bond</keyword>
<keyword id="KW-0255">Endonuclease</keyword>
<keyword id="KW-1262">Eukaryotic host gene expression shutoff by virus</keyword>
<keyword id="KW-1193">Eukaryotic host translation shutoff by virus</keyword>
<keyword id="KW-1035">Host cytoplasm</keyword>
<keyword id="KW-1190">Host gene expression shutoff by virus</keyword>
<keyword id="KW-1043">Host membrane</keyword>
<keyword id="KW-1192">Host mRNA suppression by virus</keyword>
<keyword id="KW-0945">Host-virus interaction</keyword>
<keyword id="KW-0378">Hydrolase</keyword>
<keyword id="KW-1090">Inhibition of host innate immune response by virus</keyword>
<keyword id="KW-1114">Inhibition of host interferon signaling pathway by virus</keyword>
<keyword id="KW-1092">Inhibition of host IRF3 by virus</keyword>
<keyword id="KW-1095">Inhibition of host ISG15 by virus</keyword>
<keyword id="KW-1113">Inhibition of host RLR pathway by virus</keyword>
<keyword id="KW-0922">Interferon antiviral system evasion</keyword>
<keyword id="KW-0472">Membrane</keyword>
<keyword id="KW-0479">Metal-binding</keyword>
<keyword id="KW-0489">Methyltransferase</keyword>
<keyword id="KW-1127">Modulation of host ubiquitin pathway by viral deubiquitinase</keyword>
<keyword id="KW-1130">Modulation of host ubiquitin pathway by virus</keyword>
<keyword id="KW-0540">Nuclease</keyword>
<keyword id="KW-0645">Protease</keyword>
<keyword id="KW-1185">Reference proteome</keyword>
<keyword id="KW-0677">Repeat</keyword>
<keyword id="KW-0688">Ribosomal frameshifting</keyword>
<keyword id="KW-0694">RNA-binding</keyword>
<keyword id="KW-0788">Thiol protease</keyword>
<keyword id="KW-0808">Transferase</keyword>
<keyword id="KW-0812">Transmembrane</keyword>
<keyword id="KW-1133">Transmembrane helix</keyword>
<keyword id="KW-0833">Ubl conjugation pathway</keyword>
<keyword id="KW-0899">Viral immunoevasion</keyword>
<keyword id="KW-0862">Zinc</keyword>
<keyword id="KW-0863">Zinc-finger</keyword>
<organism>
    <name type="scientific">Murine coronavirus (strain A59)</name>
    <name type="common">MHV-A59</name>
    <name type="synonym">Murine hepatitis virus</name>
    <dbReference type="NCBI Taxonomy" id="11142"/>
    <lineage>
        <taxon>Viruses</taxon>
        <taxon>Riboviria</taxon>
        <taxon>Orthornavirae</taxon>
        <taxon>Pisuviricota</taxon>
        <taxon>Pisoniviricetes</taxon>
        <taxon>Nidovirales</taxon>
        <taxon>Cornidovirineae</taxon>
        <taxon>Coronaviridae</taxon>
        <taxon>Orthocoronavirinae</taxon>
        <taxon>Betacoronavirus</taxon>
        <taxon>Embecovirus</taxon>
        <taxon>Murine coronavirus</taxon>
    </lineage>
</organism>
<feature type="chain" id="PRO_0000338278" description="Replicase polyprotein 1a">
    <location>
        <begin position="1"/>
        <end position="4468"/>
    </location>
</feature>
<feature type="chain" id="PRO_0000338279" description="Non-structural protein 1" evidence="25">
    <location>
        <begin position="1"/>
        <end position="247"/>
    </location>
</feature>
<feature type="chain" id="PRO_0000338280" description="Non-structural protein 2" evidence="25">
    <location>
        <begin position="248"/>
        <end position="832"/>
    </location>
</feature>
<feature type="chain" id="PRO_0000338281" description="Papain-like protease nsp3" evidence="25">
    <location>
        <begin position="833"/>
        <end position="2837"/>
    </location>
</feature>
<feature type="chain" id="PRO_0000338282" description="Non-structural protein 4">
    <location>
        <begin position="2838"/>
        <end position="3333"/>
    </location>
</feature>
<feature type="chain" id="PRO_0000338283" description="3C-like proteinase nsp5">
    <location>
        <begin position="3334"/>
        <end position="3635"/>
    </location>
</feature>
<feature type="chain" id="PRO_0000338284" description="Non-structural protein 6" evidence="25">
    <location>
        <begin position="3636"/>
        <end position="3921"/>
    </location>
</feature>
<feature type="chain" id="PRO_0000338285" description="Non-structural protein 7">
    <location>
        <begin position="3922"/>
        <end position="4013"/>
    </location>
</feature>
<feature type="chain" id="PRO_0000338286" description="Non-structural protein 8">
    <location>
        <begin position="4014"/>
        <end position="4207"/>
    </location>
</feature>
<feature type="chain" id="PRO_0000338287" description="RNA-capping enzyme subunit nsp9">
    <location>
        <begin position="4208"/>
        <end position="4317"/>
    </location>
</feature>
<feature type="chain" id="PRO_0000338288" description="Non-structural protein 10">
    <location>
        <begin position="4318"/>
        <end position="4454"/>
    </location>
</feature>
<feature type="chain" id="PRO_0000338289" description="Non-structural protein 11" evidence="3">
    <location>
        <begin position="4455"/>
        <end position="4468"/>
    </location>
</feature>
<feature type="transmembrane region" description="Helical" evidence="3">
    <location>
        <begin position="2286"/>
        <end position="2306"/>
    </location>
</feature>
<feature type="transmembrane region" description="Helical" evidence="3">
    <location>
        <begin position="2314"/>
        <end position="2334"/>
    </location>
</feature>
<feature type="transmembrane region" description="Helical" evidence="3">
    <location>
        <begin position="2400"/>
        <end position="2420"/>
    </location>
</feature>
<feature type="transmembrane region" description="Helical" evidence="3">
    <location>
        <begin position="2442"/>
        <end position="2462"/>
    </location>
</feature>
<feature type="transmembrane region" description="Helical" evidence="3">
    <location>
        <begin position="2625"/>
        <end position="2645"/>
    </location>
</feature>
<feature type="transmembrane region" description="Helical" evidence="3">
    <location>
        <begin position="2847"/>
        <end position="2867"/>
    </location>
</feature>
<feature type="transmembrane region" description="Helical" evidence="3">
    <location>
        <begin position="3096"/>
        <end position="3116"/>
    </location>
</feature>
<feature type="transmembrane region" description="Helical" evidence="3">
    <location>
        <begin position="3118"/>
        <end position="3138"/>
    </location>
</feature>
<feature type="transmembrane region" description="Helical" evidence="3">
    <location>
        <begin position="3150"/>
        <end position="3170"/>
    </location>
</feature>
<feature type="transmembrane region" description="Helical" evidence="3">
    <location>
        <begin position="3177"/>
        <end position="3197"/>
    </location>
</feature>
<feature type="transmembrane region" description="Helical" evidence="3">
    <location>
        <begin position="3202"/>
        <end position="3222"/>
    </location>
</feature>
<feature type="transmembrane region" description="Helical" evidence="3">
    <location>
        <begin position="3644"/>
        <end position="3664"/>
    </location>
</feature>
<feature type="transmembrane region" description="Helical" evidence="3">
    <location>
        <begin position="3674"/>
        <end position="3694"/>
    </location>
</feature>
<feature type="transmembrane region" description="Helical" evidence="3">
    <location>
        <begin position="3699"/>
        <end position="3719"/>
    </location>
</feature>
<feature type="transmembrane region" description="Helical" evidence="3">
    <location>
        <begin position="3742"/>
        <end position="3762"/>
    </location>
</feature>
<feature type="transmembrane region" description="Helical" evidence="3">
    <location>
        <begin position="3769"/>
        <end position="3789"/>
    </location>
</feature>
<feature type="transmembrane region" description="Helical" evidence="3">
    <location>
        <begin position="3796"/>
        <end position="3816"/>
    </location>
</feature>
<feature type="transmembrane region" description="Helical" evidence="3">
    <location>
        <begin position="3840"/>
        <end position="3860"/>
    </location>
</feature>
<feature type="domain" description="CoV Nsp1 globular" evidence="15">
    <location>
        <begin position="54"/>
        <end position="196"/>
    </location>
</feature>
<feature type="domain" description="BetaCoV Nsp1 C-terminal" evidence="16">
    <location>
        <begin position="217"/>
        <end position="247"/>
    </location>
</feature>
<feature type="domain" description="CoV Nsp2 N-terminal" evidence="17">
    <location>
        <begin position="251"/>
        <end position="511"/>
    </location>
</feature>
<feature type="domain" description="CoV Nsp2 middle" evidence="18">
    <location>
        <begin position="518"/>
        <end position="706"/>
    </location>
</feature>
<feature type="domain" description="CoV Nsp2 C-terminal" evidence="19">
    <location>
        <begin position="726"/>
        <end position="832"/>
    </location>
</feature>
<feature type="domain" description="Ubiquitin-like 1" evidence="4">
    <location>
        <begin position="834"/>
        <end position="946"/>
    </location>
</feature>
<feature type="domain" description="Peptidase C16 1" evidence="5">
    <location>
        <begin position="1084"/>
        <end position="1333"/>
    </location>
</feature>
<feature type="domain" description="Macro" evidence="6">
    <location>
        <begin position="1323"/>
        <end position="1482"/>
    </location>
</feature>
<feature type="domain" description="DPUP" evidence="8">
    <location>
        <begin position="1537"/>
        <end position="1609"/>
    </location>
</feature>
<feature type="domain" description="Ubiquitin-like 2" evidence="4">
    <location>
        <begin position="1608"/>
        <end position="1663"/>
    </location>
</feature>
<feature type="domain" description="Peptidase C16 2" evidence="5">
    <location>
        <begin position="1678"/>
        <end position="1937"/>
    </location>
</feature>
<feature type="domain" description="Nucleic acid-binding" evidence="9">
    <location>
        <begin position="1951"/>
        <end position="2052"/>
    </location>
</feature>
<feature type="domain" description="G2M" evidence="22">
    <location>
        <begin position="2107"/>
        <end position="2256"/>
    </location>
</feature>
<feature type="domain" description="3Ecto" evidence="21">
    <location>
        <begin position="2322"/>
        <end position="2383"/>
    </location>
</feature>
<feature type="domain" description="CoV Nsp3 Y" evidence="20">
    <location>
        <begin position="2470"/>
        <end position="2837"/>
    </location>
</feature>
<feature type="domain" description="Nsp4C" evidence="10">
    <location>
        <begin position="3236"/>
        <end position="3333"/>
    </location>
</feature>
<feature type="domain" description="Peptidase C30" evidence="7">
    <location>
        <begin position="3334"/>
        <end position="3635"/>
    </location>
</feature>
<feature type="domain" description="RdRp Nsp7 cofactor" evidence="11">
    <location>
        <begin position="3922"/>
        <end position="4010"/>
    </location>
</feature>
<feature type="domain" description="RdRp Nsp8 cofactor" evidence="12">
    <location>
        <begin position="4011"/>
        <end position="4207"/>
    </location>
</feature>
<feature type="domain" description="Nsp9 ssRNA-binding" evidence="13">
    <location>
        <begin position="4208"/>
        <end position="4317"/>
    </location>
</feature>
<feature type="domain" description="ExoN/MTase coactivator" evidence="14">
    <location>
        <begin position="4318"/>
        <end position="4455"/>
    </location>
</feature>
<feature type="zinc finger region" description="C4-type 1" evidence="5">
    <location>
        <begin position="1198"/>
        <end position="1226"/>
    </location>
</feature>
<feature type="zinc finger region" description="C4-type 2" evidence="5">
    <location>
        <begin position="1794"/>
        <end position="1830"/>
    </location>
</feature>
<feature type="zinc finger region" evidence="1">
    <location>
        <begin position="4391"/>
        <end position="4407"/>
    </location>
</feature>
<feature type="zinc finger region" evidence="1">
    <location>
        <begin position="4433"/>
        <end position="4446"/>
    </location>
</feature>
<feature type="region of interest" description="C4" evidence="17">
    <location>
        <begin position="390"/>
        <end position="414"/>
    </location>
</feature>
<feature type="region of interest" description="Disordered" evidence="23">
    <location>
        <begin position="999"/>
        <end position="1027"/>
    </location>
</feature>
<feature type="region of interest" description="HD1">
    <location>
        <begin position="2225"/>
        <end position="2645"/>
    </location>
</feature>
<feature type="region of interest" description="Y1" evidence="20">
    <location>
        <begin position="2470"/>
        <end position="2560"/>
    </location>
</feature>
<feature type="region of interest" description="ZF1" evidence="20">
    <location>
        <begin position="2474"/>
        <end position="2487"/>
    </location>
</feature>
<feature type="region of interest" description="ZF2" evidence="20">
    <location>
        <begin position="2520"/>
        <end position="2530"/>
    </location>
</feature>
<feature type="region of interest" description="CoV-Y" evidence="20">
    <location>
        <begin position="2561"/>
        <end position="2837"/>
    </location>
</feature>
<feature type="region of interest" description="Y2" evidence="20">
    <location>
        <begin position="2561"/>
        <end position="2653"/>
    </location>
</feature>
<feature type="region of interest" description="Y3" evidence="20">
    <location>
        <begin position="2654"/>
        <end position="2736"/>
    </location>
</feature>
<feature type="region of interest" description="Y4" evidence="20">
    <location>
        <begin position="2737"/>
        <end position="2837"/>
    </location>
</feature>
<feature type="region of interest" description="HD2">
    <location>
        <begin position="2847"/>
        <end position="3222"/>
    </location>
</feature>
<feature type="region of interest" description="HD3">
    <location>
        <begin position="3526"/>
        <end position="3860"/>
    </location>
</feature>
<feature type="active site" description="For PL1-PRO activity" evidence="5">
    <location>
        <position position="1121"/>
    </location>
</feature>
<feature type="active site" description="For PL1-PRO activity" evidence="5">
    <location>
        <position position="1272"/>
    </location>
</feature>
<feature type="active site" description="For PL1-PRO activity" evidence="5">
    <location>
        <position position="1283"/>
    </location>
</feature>
<feature type="active site" description="For PL2-PRO activity" evidence="5">
    <location>
        <position position="1716"/>
    </location>
</feature>
<feature type="active site" description="For PL2-PRO activity" evidence="5">
    <location>
        <position position="1873"/>
    </location>
</feature>
<feature type="active site" description="For PL2-PRO activity" evidence="5">
    <location>
        <position position="1887"/>
    </location>
</feature>
<feature type="active site" description="For 3CL-PRO activity" evidence="7">
    <location>
        <position position="3374"/>
    </location>
</feature>
<feature type="active site" description="For 3CL-PRO activity">
    <location>
        <position position="3478"/>
    </location>
</feature>
<feature type="binding site" evidence="17">
    <location>
        <position position="390"/>
    </location>
    <ligand>
        <name>Zn(2+)</name>
        <dbReference type="ChEBI" id="CHEBI:29105"/>
        <label>1</label>
    </ligand>
</feature>
<feature type="binding site" evidence="17">
    <location>
        <position position="395"/>
    </location>
    <ligand>
        <name>Zn(2+)</name>
        <dbReference type="ChEBI" id="CHEBI:29105"/>
        <label>1</label>
    </ligand>
</feature>
<feature type="binding site" evidence="17">
    <location>
        <position position="411"/>
    </location>
    <ligand>
        <name>Zn(2+)</name>
        <dbReference type="ChEBI" id="CHEBI:29105"/>
        <label>1</label>
    </ligand>
</feature>
<feature type="binding site" evidence="17">
    <location>
        <position position="414"/>
    </location>
    <ligand>
        <name>Zn(2+)</name>
        <dbReference type="ChEBI" id="CHEBI:29105"/>
        <label>1</label>
    </ligand>
</feature>
<feature type="binding site" evidence="5">
    <location>
        <position position="1198"/>
    </location>
    <ligand>
        <name>Zn(2+)</name>
        <dbReference type="ChEBI" id="CHEBI:29105"/>
        <label>2</label>
    </ligand>
</feature>
<feature type="binding site" evidence="5">
    <location>
        <position position="1201"/>
    </location>
    <ligand>
        <name>Zn(2+)</name>
        <dbReference type="ChEBI" id="CHEBI:29105"/>
        <label>2</label>
    </ligand>
</feature>
<feature type="binding site" evidence="5">
    <location>
        <position position="1224"/>
    </location>
    <ligand>
        <name>Zn(2+)</name>
        <dbReference type="ChEBI" id="CHEBI:29105"/>
        <label>2</label>
    </ligand>
</feature>
<feature type="binding site" evidence="5">
    <location>
        <position position="1226"/>
    </location>
    <ligand>
        <name>Zn(2+)</name>
        <dbReference type="ChEBI" id="CHEBI:29105"/>
        <label>2</label>
    </ligand>
</feature>
<feature type="binding site" evidence="5">
    <location>
        <position position="1794"/>
    </location>
    <ligand>
        <name>Zn(2+)</name>
        <dbReference type="ChEBI" id="CHEBI:29105"/>
        <label>3</label>
    </ligand>
</feature>
<feature type="binding site" evidence="5">
    <location>
        <position position="1796"/>
    </location>
    <ligand>
        <name>Zn(2+)</name>
        <dbReference type="ChEBI" id="CHEBI:29105"/>
        <label>3</label>
    </ligand>
</feature>
<feature type="binding site" evidence="5">
    <location>
        <position position="1828"/>
    </location>
    <ligand>
        <name>Zn(2+)</name>
        <dbReference type="ChEBI" id="CHEBI:29105"/>
        <label>3</label>
    </ligand>
</feature>
<feature type="binding site" evidence="5">
    <location>
        <position position="1830"/>
    </location>
    <ligand>
        <name>Zn(2+)</name>
        <dbReference type="ChEBI" id="CHEBI:29105"/>
        <label>3</label>
    </ligand>
</feature>
<feature type="binding site" evidence="20">
    <location>
        <position position="2474"/>
    </location>
    <ligand>
        <name>Zn(2+)</name>
        <dbReference type="ChEBI" id="CHEBI:29105"/>
        <label>4</label>
    </ligand>
</feature>
<feature type="binding site" evidence="20">
    <location>
        <position position="2479"/>
    </location>
    <ligand>
        <name>Zn(2+)</name>
        <dbReference type="ChEBI" id="CHEBI:29105"/>
        <label>4</label>
    </ligand>
</feature>
<feature type="binding site" evidence="20">
    <location>
        <position position="2484"/>
    </location>
    <ligand>
        <name>Zn(2+)</name>
        <dbReference type="ChEBI" id="CHEBI:29105"/>
        <label>4</label>
    </ligand>
</feature>
<feature type="binding site" evidence="20">
    <location>
        <position position="2487"/>
    </location>
    <ligand>
        <name>Zn(2+)</name>
        <dbReference type="ChEBI" id="CHEBI:29105"/>
        <label>4</label>
    </ligand>
</feature>
<feature type="binding site" evidence="20">
    <location>
        <position position="2520"/>
    </location>
    <ligand>
        <name>Zn(2+)</name>
        <dbReference type="ChEBI" id="CHEBI:29105"/>
        <label>5</label>
    </ligand>
</feature>
<feature type="binding site" evidence="20">
    <location>
        <position position="2523"/>
    </location>
    <ligand>
        <name>Zn(2+)</name>
        <dbReference type="ChEBI" id="CHEBI:29105"/>
        <label>5</label>
    </ligand>
</feature>
<feature type="binding site" evidence="20">
    <location>
        <position position="2527"/>
    </location>
    <ligand>
        <name>Zn(2+)</name>
        <dbReference type="ChEBI" id="CHEBI:29105"/>
        <label>5</label>
    </ligand>
</feature>
<feature type="binding site" evidence="20">
    <location>
        <position position="2530"/>
    </location>
    <ligand>
        <name>Zn(2+)</name>
        <dbReference type="ChEBI" id="CHEBI:29105"/>
        <label>5</label>
    </ligand>
</feature>
<feature type="binding site" evidence="14">
    <location>
        <position position="4391"/>
    </location>
    <ligand>
        <name>Zn(2+)</name>
        <dbReference type="ChEBI" id="CHEBI:29105"/>
        <label>6</label>
    </ligand>
</feature>
<feature type="binding site" evidence="14">
    <location>
        <position position="4394"/>
    </location>
    <ligand>
        <name>Zn(2+)</name>
        <dbReference type="ChEBI" id="CHEBI:29105"/>
        <label>6</label>
    </ligand>
</feature>
<feature type="binding site" evidence="14">
    <location>
        <position position="4400"/>
    </location>
    <ligand>
        <name>Zn(2+)</name>
        <dbReference type="ChEBI" id="CHEBI:29105"/>
        <label>6</label>
    </ligand>
</feature>
<feature type="binding site" evidence="14">
    <location>
        <position position="4407"/>
    </location>
    <ligand>
        <name>Zn(2+)</name>
        <dbReference type="ChEBI" id="CHEBI:29105"/>
        <label>6</label>
    </ligand>
</feature>
<feature type="binding site" evidence="14">
    <location>
        <position position="4433"/>
    </location>
    <ligand>
        <name>Zn(2+)</name>
        <dbReference type="ChEBI" id="CHEBI:29105"/>
        <label>7</label>
    </ligand>
</feature>
<feature type="binding site" evidence="14">
    <location>
        <position position="4436"/>
    </location>
    <ligand>
        <name>Zn(2+)</name>
        <dbReference type="ChEBI" id="CHEBI:29105"/>
        <label>7</label>
    </ligand>
</feature>
<feature type="binding site" evidence="14">
    <location>
        <position position="4444"/>
    </location>
    <ligand>
        <name>Zn(2+)</name>
        <dbReference type="ChEBI" id="CHEBI:29105"/>
        <label>7</label>
    </ligand>
</feature>
<feature type="binding site" evidence="14">
    <location>
        <position position="4446"/>
    </location>
    <ligand>
        <name>Zn(2+)</name>
        <dbReference type="ChEBI" id="CHEBI:29105"/>
        <label>7</label>
    </ligand>
</feature>
<feature type="site" description="Cleavage; by PL1-PRO" evidence="25">
    <location>
        <begin position="247"/>
        <end position="248"/>
    </location>
</feature>
<feature type="site" description="Cleavage; by PL1-PRO" evidence="25">
    <location>
        <begin position="832"/>
        <end position="833"/>
    </location>
</feature>
<feature type="site" description="Cleavage; by PL2-PRO">
    <location>
        <begin position="2837"/>
        <end position="2838"/>
    </location>
</feature>
<feature type="site" description="Cleavage; by 3CL-PRO">
    <location>
        <begin position="3333"/>
        <end position="3334"/>
    </location>
</feature>
<feature type="site" description="Cleavage; by 3CL-PRO">
    <location>
        <begin position="3635"/>
        <end position="3636"/>
    </location>
</feature>
<feature type="site" description="Cleavage; by 3CL-PRO">
    <location>
        <begin position="3921"/>
        <end position="3922"/>
    </location>
</feature>
<feature type="site" description="Cleavage; by 3CL-PRO">
    <location>
        <begin position="4013"/>
        <end position="4014"/>
    </location>
</feature>
<feature type="site" description="Cleavage; by 3CL-PRO">
    <location>
        <begin position="4207"/>
        <end position="4208"/>
    </location>
</feature>
<feature type="site" description="Cleavage; by 3CL-PRO">
    <location>
        <begin position="4317"/>
        <end position="4318"/>
    </location>
</feature>
<feature type="site" description="Cleavage; by 3CL-PRO">
    <location>
        <begin position="4454"/>
        <end position="4455"/>
    </location>
</feature>
<feature type="disulfide bond" evidence="21">
    <location>
        <begin position="2338"/>
        <end position="2362"/>
    </location>
</feature>
<feature type="disulfide bond" evidence="21">
    <location>
        <begin position="2353"/>
        <end position="2359"/>
    </location>
</feature>
<feature type="sequence variant" description="In strain: Isolate C12 mutant.">
    <original>P</original>
    <variation>S</variation>
    <location>
        <position position="1699"/>
    </location>
</feature>
<feature type="sequence variant" description="In strain: Isolate C12 mutant.">
    <original>M</original>
    <variation>K</variation>
    <location>
        <position position="2196"/>
    </location>
</feature>
<feature type="mutagenesis site" description="No effect." evidence="24">
    <original>F</original>
    <variation>A</variation>
    <variation>H</variation>
    <variation>W</variation>
    <location>
        <position position="3331"/>
    </location>
</feature>
<feature type="mutagenesis site" description="No processing between peptide HD2 and 3CL-PRO." evidence="24">
    <original>L</original>
    <variation>I</variation>
    <variation>S</variation>
    <location>
        <position position="3332"/>
    </location>
</feature>
<feature type="mutagenesis site" description="No processing between peptide HD2 and 3CL-PRO." evidence="24">
    <original>Q</original>
    <variation>A</variation>
    <variation>K</variation>
    <variation>R</variation>
    <location>
        <position position="3333"/>
    </location>
</feature>
<feature type="mutagenesis site" description="No effect." evidence="24">
    <original>S</original>
    <variation>A</variation>
    <location>
        <position position="3334"/>
    </location>
</feature>
<feature type="mutagenesis site" description="No processing between peptide HD2 and 3CL-PRO." evidence="24">
    <original>S</original>
    <variation>C</variation>
    <location>
        <position position="3334"/>
    </location>
</feature>
<feature type="mutagenesis site" description="No effect." evidence="24">
    <original>G</original>
    <variation>A</variation>
    <location>
        <position position="3335"/>
    </location>
</feature>
<feature type="mutagenesis site" description="No processing between peptide HD2 and 3CL-PRO." evidence="24">
    <original>G</original>
    <variation>P</variation>
    <location>
        <position position="3335"/>
    </location>
</feature>
<feature type="mutagenesis site" description="No effect." evidence="24">
    <original>I</original>
    <variation>L</variation>
    <location>
        <position position="3336"/>
    </location>
</feature>
<feature type="mutagenesis site" description="Complete loss of 3CL-PRO activity." evidence="24">
    <original>C</original>
    <variation>A</variation>
    <location>
        <position position="3478"/>
    </location>
</feature>
<feature type="sequence conflict" description="In Ref. 3." evidence="25" ref="3">
    <original>WR</original>
    <variation>CA</variation>
    <location>
        <begin position="287"/>
        <end position="288"/>
    </location>
</feature>
<feature type="sequence conflict" description="In Ref. 3." evidence="25" ref="3">
    <original>L</original>
    <variation>V</variation>
    <location>
        <position position="311"/>
    </location>
</feature>
<feature type="sequence conflict" description="In Ref. 3." evidence="25" ref="3">
    <original>D</original>
    <variation>G</variation>
    <location>
        <position position="570"/>
    </location>
</feature>
<feature type="sequence conflict" description="In Ref. 2." evidence="25" ref="2">
    <original>E</original>
    <variation>EL</variation>
    <location>
        <position position="3620"/>
    </location>
</feature>
<feature type="sequence conflict" description="In Ref. 2." evidence="25" ref="2">
    <original>T</original>
    <variation>TL</variation>
    <location>
        <position position="3711"/>
    </location>
</feature>
<feature type="sequence conflict" description="In Ref. 2." evidence="25" ref="2">
    <original>M</original>
    <variation>V</variation>
    <location>
        <position position="3968"/>
    </location>
</feature>
<feature type="strand" evidence="26">
    <location>
        <begin position="840"/>
        <end position="842"/>
    </location>
</feature>
<feature type="strand" evidence="26">
    <location>
        <begin position="849"/>
        <end position="853"/>
    </location>
</feature>
<feature type="strand" evidence="26">
    <location>
        <begin position="859"/>
        <end position="861"/>
    </location>
</feature>
<feature type="helix" evidence="26">
    <location>
        <begin position="862"/>
        <end position="870"/>
    </location>
</feature>
<feature type="strand" evidence="26">
    <location>
        <begin position="874"/>
        <end position="877"/>
    </location>
</feature>
<feature type="helix" evidence="26">
    <location>
        <begin position="882"/>
        <end position="896"/>
    </location>
</feature>
<feature type="helix" evidence="26">
    <location>
        <begin position="904"/>
        <end position="907"/>
    </location>
</feature>
<feature type="helix" evidence="26">
    <location>
        <begin position="909"/>
        <end position="918"/>
    </location>
</feature>
<feature type="strand" evidence="26">
    <location>
        <begin position="923"/>
        <end position="930"/>
    </location>
</feature>
<feature type="strand" evidence="26">
    <location>
        <begin position="935"/>
        <end position="942"/>
    </location>
</feature>
<gene>
    <name type="ORF">1a</name>
</gene>
<protein>
    <recommendedName>
        <fullName>Replicase polyprotein 1a</fullName>
        <shortName>pp1a</shortName>
    </recommendedName>
    <alternativeName>
        <fullName>ORF1a polyprotein</fullName>
    </alternativeName>
    <component>
        <recommendedName>
            <fullName>Non-structural protein 1</fullName>
            <shortName>nsp1</shortName>
        </recommendedName>
        <alternativeName>
            <fullName>p28</fullName>
        </alternativeName>
    </component>
    <component>
        <recommendedName>
            <fullName>Non-structural protein 2</fullName>
            <shortName>nsp2</shortName>
        </recommendedName>
        <alternativeName>
            <fullName>p65</fullName>
        </alternativeName>
    </component>
    <component>
        <recommendedName>
            <fullName>Papain-like protease nsp3</fullName>
            <shortName>PL-PRO</shortName>
            <ecNumber>3.4.19.12</ecNumber>
            <ecNumber>3.4.22.-</ecNumber>
        </recommendedName>
        <alternativeName>
            <fullName>Non-structural protein 3</fullName>
            <shortName>nsp3</shortName>
        </alternativeName>
        <alternativeName>
            <fullName>PL1-PRO/PL2-PRO</fullName>
        </alternativeName>
        <alternativeName>
            <fullName>PL1/PL2</fullName>
        </alternativeName>
        <alternativeName>
            <fullName>PL2-PRO</fullName>
        </alternativeName>
        <alternativeName>
            <fullName>Papain-like proteinases 1/2</fullName>
        </alternativeName>
        <alternativeName>
            <fullName>p210</fullName>
        </alternativeName>
    </component>
    <component>
        <recommendedName>
            <fullName>Non-structural protein 4</fullName>
            <shortName>nsp4</shortName>
        </recommendedName>
        <alternativeName>
            <fullName>Peptide HD2</fullName>
        </alternativeName>
        <alternativeName>
            <fullName>p44</fullName>
        </alternativeName>
    </component>
    <component>
        <recommendedName>
            <fullName>3C-like proteinase nsp5</fullName>
            <shortName>3CL-PRO</shortName>
            <shortName>3CLp</shortName>
            <ecNumber>3.4.22.69</ecNumber>
        </recommendedName>
        <alternativeName>
            <fullName>M-PRO</fullName>
        </alternativeName>
        <alternativeName>
            <fullName>nsp5</fullName>
        </alternativeName>
        <alternativeName>
            <fullName>p27</fullName>
        </alternativeName>
    </component>
    <component>
        <recommendedName>
            <fullName>Non-structural protein 6</fullName>
            <shortName>nsp6</shortName>
        </recommendedName>
    </component>
    <component>
        <recommendedName>
            <fullName>Non-structural protein 7</fullName>
            <shortName>nsp7</shortName>
        </recommendedName>
        <alternativeName>
            <fullName>p10</fullName>
        </alternativeName>
    </component>
    <component>
        <recommendedName>
            <fullName>Non-structural protein 8</fullName>
            <shortName>nsp8</shortName>
        </recommendedName>
        <alternativeName>
            <fullName>p22</fullName>
        </alternativeName>
    </component>
    <component>
        <recommendedName>
            <fullName>RNA-capping enzyme subunit nsp9</fullName>
        </recommendedName>
        <alternativeName>
            <fullName>Non-structural protein 9</fullName>
            <shortName>nsp9</shortName>
            <ecNumber>2.7.7.50</ecNumber>
        </alternativeName>
        <alternativeName>
            <fullName>p12</fullName>
        </alternativeName>
    </component>
    <component>
        <recommendedName>
            <fullName>Non-structural protein 10</fullName>
            <shortName>nsp10</shortName>
        </recommendedName>
        <alternativeName>
            <fullName>Growth factor-like peptide</fullName>
            <shortName>GFL</shortName>
        </alternativeName>
        <alternativeName>
            <fullName>p15</fullName>
        </alternativeName>
    </component>
    <component>
        <recommendedName>
            <fullName>Non-structural protein 11</fullName>
            <shortName>nsp11</shortName>
        </recommendedName>
    </component>
</protein>
<organismHost>
    <name type="scientific">Mus musculus</name>
    <name type="common">Mouse</name>
    <dbReference type="NCBI Taxonomy" id="10090"/>
</organismHost>
<evidence type="ECO:0000250" key="1"/>
<evidence type="ECO:0000250" key="2">
    <source>
        <dbReference type="UniProtKB" id="P0DTC1"/>
    </source>
</evidence>
<evidence type="ECO:0000255" key="3"/>
<evidence type="ECO:0000255" key="4">
    <source>
        <dbReference type="PROSITE-ProRule" id="PRU00214"/>
    </source>
</evidence>
<evidence type="ECO:0000255" key="5">
    <source>
        <dbReference type="PROSITE-ProRule" id="PRU00444"/>
    </source>
</evidence>
<evidence type="ECO:0000255" key="6">
    <source>
        <dbReference type="PROSITE-ProRule" id="PRU00490"/>
    </source>
</evidence>
<evidence type="ECO:0000255" key="7">
    <source>
        <dbReference type="PROSITE-ProRule" id="PRU00772"/>
    </source>
</evidence>
<evidence type="ECO:0000255" key="8">
    <source>
        <dbReference type="PROSITE-ProRule" id="PRU01289"/>
    </source>
</evidence>
<evidence type="ECO:0000255" key="9">
    <source>
        <dbReference type="PROSITE-ProRule" id="PRU01290"/>
    </source>
</evidence>
<evidence type="ECO:0000255" key="10">
    <source>
        <dbReference type="PROSITE-ProRule" id="PRU01291"/>
    </source>
</evidence>
<evidence type="ECO:0000255" key="11">
    <source>
        <dbReference type="PROSITE-ProRule" id="PRU01294"/>
    </source>
</evidence>
<evidence type="ECO:0000255" key="12">
    <source>
        <dbReference type="PROSITE-ProRule" id="PRU01295"/>
    </source>
</evidence>
<evidence type="ECO:0000255" key="13">
    <source>
        <dbReference type="PROSITE-ProRule" id="PRU01296"/>
    </source>
</evidence>
<evidence type="ECO:0000255" key="14">
    <source>
        <dbReference type="PROSITE-ProRule" id="PRU01297"/>
    </source>
</evidence>
<evidence type="ECO:0000255" key="15">
    <source>
        <dbReference type="PROSITE-ProRule" id="PRU01307"/>
    </source>
</evidence>
<evidence type="ECO:0000255" key="16">
    <source>
        <dbReference type="PROSITE-ProRule" id="PRU01308"/>
    </source>
</evidence>
<evidence type="ECO:0000255" key="17">
    <source>
        <dbReference type="PROSITE-ProRule" id="PRU01333"/>
    </source>
</evidence>
<evidence type="ECO:0000255" key="18">
    <source>
        <dbReference type="PROSITE-ProRule" id="PRU01334"/>
    </source>
</evidence>
<evidence type="ECO:0000255" key="19">
    <source>
        <dbReference type="PROSITE-ProRule" id="PRU01335"/>
    </source>
</evidence>
<evidence type="ECO:0000255" key="20">
    <source>
        <dbReference type="PROSITE-ProRule" id="PRU01336"/>
    </source>
</evidence>
<evidence type="ECO:0000255" key="21">
    <source>
        <dbReference type="PROSITE-ProRule" id="PRU01337"/>
    </source>
</evidence>
<evidence type="ECO:0000255" key="22">
    <source>
        <dbReference type="PROSITE-ProRule" id="PRU01338"/>
    </source>
</evidence>
<evidence type="ECO:0000256" key="23">
    <source>
        <dbReference type="SAM" id="MobiDB-lite"/>
    </source>
</evidence>
<evidence type="ECO:0000269" key="24">
    <source>
    </source>
</evidence>
<evidence type="ECO:0000305" key="25"/>
<evidence type="ECO:0007829" key="26">
    <source>
        <dbReference type="PDB" id="2M0A"/>
    </source>
</evidence>
<accession>P0C6V0</accession>
<accession>P16342</accession>
<comment type="function">
    <text evidence="1">The papain-like proteinase 1 (PL1-PRO) and papain-like proteinase 2 (PL2-PRO) are responsible for the cleavages located at the N-terminus of the replicase polyprotein. In addition, PLP2 possesses a deubiquitinating/deISGylating activity and processes both 'Lys-48'- and 'Lys-63'-linked polyubiquitin chains from cellular substrates. Antagonizes innate immune induction of type I interferon by blocking the phosphorylation, dimerization and subsequent nuclear translocation of host IRF-3 (By similarity).</text>
</comment>
<comment type="function">
    <molecule>3C-like proteinase nsp5</molecule>
    <text evidence="7">Responsible for the majority of cleavages as it cleaves the C-terminus of replicase polyprotein at 11 sites. Recognizes substrates containing the core sequence [ILMVF]-Q-|-[SGACN]. Inhibited by the substrate-analog Cbz-Val-Asn-Ser-Thr-Leu-Gln-CMK. Also contains an ADP-ribose-1''-phosphate (ADRP)-binding function (By similarity).</text>
</comment>
<comment type="function">
    <text evidence="1">Nsp7-nsp8 hexadecamer may possibly confer processivity to the polymerase, maybe by binding to dsRNA or by producing primers utilized by the latter.</text>
</comment>
<comment type="function">
    <molecule>RNA-capping enzyme subunit nsp9</molecule>
    <text evidence="2">Catalytic subunit of viral RNA capping enzyme which catalyzes the RNA guanylyltransferase reaction for genomic and sub-genomic RNAs. The kinase-like NiRAN domain of NSP12 transfers RNA to the amino terminus of NSP9, forming a covalent RNA-protein intermediate. Subsequently, the NiRAN domain transfers RNA to GDP, forming the core cap structure GpppA-RNA. The NSP14 and NSP16 methyltransferases then add methyl groups to form functional cap structures.</text>
</comment>
<comment type="function">
    <molecule>Non-structural protein 1</molecule>
    <text evidence="1">Binds to the 40S ribosomal subunit and inhibits host translation. The nsp1-40S ribosome complex further induces an endonucleolytic cleavage near the 5'UTR of host mRNAs, targeting them for degradation. By suppressing host gene expression, nsp1 facilitates efficient viral gene expression in infected cells and evasion from host immune response (By similarity).</text>
</comment>
<comment type="catalytic activity">
    <molecule>Papain-like protease nsp3</molecule>
    <reaction evidence="2">
        <text>Thiol-dependent hydrolysis of ester, thioester, amide, peptide and isopeptide bonds formed by the C-terminal Gly of ubiquitin (a 76-residue protein attached to proteins as an intracellular targeting signal).</text>
        <dbReference type="EC" id="3.4.19.12"/>
    </reaction>
</comment>
<comment type="catalytic activity">
    <molecule>3C-like proteinase nsp5</molecule>
    <reaction evidence="2">
        <text>TSAVLQ-|-SGFRK-NH2 and SGVTFQ-|-GKFKK the two peptides corresponding to the two self-cleavage sites of the SARS 3C-like proteinase are the two most reactive peptide substrates. The enzyme exhibits a strong preference for substrates containing Gln at P1 position and Leu at P2 position.</text>
        <dbReference type="EC" id="3.4.22.69"/>
    </reaction>
</comment>
<comment type="catalytic activity">
    <molecule>RNA-capping enzyme subunit nsp9</molecule>
    <reaction evidence="2">
        <text>a 5'-end diphospho-ribonucleoside in mRNA + GTP + H(+) = a 5'-end (5'-triphosphoguanosine)-ribonucleoside in mRNA + diphosphate</text>
        <dbReference type="Rhea" id="RHEA:67012"/>
        <dbReference type="Rhea" id="RHEA-COMP:17165"/>
        <dbReference type="Rhea" id="RHEA-COMP:17166"/>
        <dbReference type="ChEBI" id="CHEBI:15378"/>
        <dbReference type="ChEBI" id="CHEBI:33019"/>
        <dbReference type="ChEBI" id="CHEBI:37565"/>
        <dbReference type="ChEBI" id="CHEBI:167616"/>
        <dbReference type="ChEBI" id="CHEBI:167617"/>
        <dbReference type="EC" id="2.7.7.50"/>
    </reaction>
    <physiologicalReaction direction="right-to-left" evidence="2">
        <dbReference type="Rhea" id="RHEA:67014"/>
    </physiologicalReaction>
</comment>
<comment type="subunit">
    <text evidence="1">3CL-PRO exists as monomer and homodimer. Eight copies of nsp7 and eight copies of nsp8 assemble to form a heterohexadecamer. Nsp9 is a dimer. Nsp10 forms a dodecamer (By similarity).</text>
</comment>
<comment type="subcellular location">
    <molecule>Papain-like protease nsp3</molecule>
    <subcellularLocation>
        <location evidence="25">Host membrane</location>
        <topology evidence="25">Multi-pass membrane protein</topology>
    </subcellularLocation>
</comment>
<comment type="subcellular location">
    <molecule>Non-structural protein 4</molecule>
    <subcellularLocation>
        <location evidence="25">Host membrane</location>
        <topology evidence="25">Multi-pass membrane protein</topology>
    </subcellularLocation>
</comment>
<comment type="subcellular location">
    <molecule>Non-structural protein 6</molecule>
    <subcellularLocation>
        <location evidence="25">Host membrane</location>
        <topology evidence="25">Multi-pass membrane protein</topology>
    </subcellularLocation>
</comment>
<comment type="subcellular location">
    <molecule>Non-structural protein 7</molecule>
    <subcellularLocation>
        <location evidence="1">Host cytoplasm</location>
        <location evidence="1">Host perinuclear region</location>
    </subcellularLocation>
    <text>nsp7, nsp8, nsp9 and nsp10 are localized in cytoplasmic foci, largely perinuclear. Late in infection, they merge into confluent complexes.</text>
</comment>
<comment type="subcellular location">
    <molecule>Non-structural protein 8</molecule>
    <subcellularLocation>
        <location evidence="1">Host cytoplasm</location>
        <location evidence="1">Host perinuclear region</location>
    </subcellularLocation>
    <text>nsp7, nsp8, nsp9 and nsp10 are localized in cytoplasmic foci, largely perinuclear. Late in infection, they merge into confluent complexes.</text>
</comment>
<comment type="subcellular location">
    <molecule>RNA-capping enzyme subunit nsp9</molecule>
    <subcellularLocation>
        <location evidence="1">Host cytoplasm</location>
        <location evidence="1">Host perinuclear region</location>
    </subcellularLocation>
    <text>nsp7, nsp8, nsp9 and nsp10 are localized in cytoplasmic foci, largely perinuclear. Late in infection, they merge into confluent complexes.</text>
</comment>
<comment type="subcellular location">
    <molecule>Non-structural protein 10</molecule>
    <subcellularLocation>
        <location evidence="1">Host cytoplasm</location>
        <location evidence="1">Host perinuclear region</location>
    </subcellularLocation>
    <text>nsp7, nsp8, nsp9 and nsp10 are localized in cytoplasmic foci, largely perinuclear. Late in infection, they merge into confluent complexes.</text>
</comment>
<comment type="alternative products">
    <event type="ribosomal frameshifting"/>
    <isoform>
        <id>P0C6V0-1</id>
        <name>Replicase polyprotein 1a</name>
        <name>pp1a</name>
        <name>ORF1a polyprotein</name>
        <sequence type="displayed"/>
    </isoform>
    <isoform>
        <id>P0C6X9-1</id>
        <name>Replicase polyprotein 1ab</name>
        <name>pp1ab</name>
        <sequence type="external"/>
    </isoform>
</comment>
<comment type="domain">
    <text>The hydrophobic domains (HD) could mediate the membrane association of the replication complex and thereby alter the architecture of the host cell membrane.</text>
</comment>
<comment type="PTM">
    <text evidence="1">Specific enzymatic cleavages in vivo by its own proteases yield mature proteins. 3CL-PRO and PL-PRO proteinases are autocatalytically processed (By similarity).</text>
</comment>
<comment type="miscellaneous">
    <molecule>Isoform Replicase polyprotein 1a</molecule>
    <text>Produced by conventional translation.</text>
</comment>
<comment type="similarity">
    <text evidence="25">Belongs to the coronaviruses polyprotein 1ab family.</text>
</comment>
<proteinExistence type="evidence at protein level"/>
<dbReference type="EC" id="3.4.19.12"/>
<dbReference type="EC" id="3.4.22.-"/>
<dbReference type="EC" id="3.4.22.69"/>
<dbReference type="EC" id="2.7.7.50"/>
<dbReference type="EMBL" id="X73559">
    <property type="status" value="NOT_ANNOTATED_CDS"/>
    <property type="molecule type" value="Genomic_RNA"/>
</dbReference>
<dbReference type="EMBL" id="AF029248">
    <property type="protein sequence ID" value="AAB86820.1"/>
    <property type="molecule type" value="Genomic_RNA"/>
</dbReference>
<dbReference type="EMBL" id="M27198">
    <property type="protein sequence ID" value="AAA74011.1"/>
    <property type="molecule type" value="Genomic_RNA"/>
</dbReference>
<dbReference type="PIR" id="A32440">
    <property type="entry name" value="A32440"/>
</dbReference>
<dbReference type="PIR" id="S15760">
    <property type="entry name" value="S15760"/>
</dbReference>
<dbReference type="PDB" id="2M0A">
    <property type="method" value="NMR"/>
    <property type="chains" value="A=833-946"/>
</dbReference>
<dbReference type="PDBsum" id="2M0A"/>
<dbReference type="BMRB" id="P0C6V0"/>
<dbReference type="SMR" id="P0C6V0"/>
<dbReference type="IntAct" id="P0C6V0">
    <property type="interactions" value="5"/>
</dbReference>
<dbReference type="MEROPS" id="C30.001"/>
<dbReference type="BRENDA" id="3.4.22.B14">
    <property type="organism ID" value="3442"/>
</dbReference>
<dbReference type="SABIO-RK" id="P0C6V0"/>
<dbReference type="EvolutionaryTrace" id="P0C6V0"/>
<dbReference type="Proteomes" id="UP000007192">
    <property type="component" value="Segment"/>
</dbReference>
<dbReference type="GO" id="GO:0033644">
    <property type="term" value="C:host cell membrane"/>
    <property type="evidence" value="ECO:0007669"/>
    <property type="project" value="UniProtKB-SubCell"/>
</dbReference>
<dbReference type="GO" id="GO:0044220">
    <property type="term" value="C:host cell perinuclear region of cytoplasm"/>
    <property type="evidence" value="ECO:0007669"/>
    <property type="project" value="UniProtKB-SubCell"/>
</dbReference>
<dbReference type="GO" id="GO:0016020">
    <property type="term" value="C:membrane"/>
    <property type="evidence" value="ECO:0007669"/>
    <property type="project" value="UniProtKB-KW"/>
</dbReference>
<dbReference type="GO" id="GO:0004843">
    <property type="term" value="F:cysteine-type deubiquitinase activity"/>
    <property type="evidence" value="ECO:0007669"/>
    <property type="project" value="UniProtKB-EC"/>
</dbReference>
<dbReference type="GO" id="GO:0004197">
    <property type="term" value="F:cysteine-type endopeptidase activity"/>
    <property type="evidence" value="ECO:0007669"/>
    <property type="project" value="InterPro"/>
</dbReference>
<dbReference type="GO" id="GO:0004519">
    <property type="term" value="F:endonuclease activity"/>
    <property type="evidence" value="ECO:0007669"/>
    <property type="project" value="UniProtKB-KW"/>
</dbReference>
<dbReference type="GO" id="GO:0008168">
    <property type="term" value="F:methyltransferase activity"/>
    <property type="evidence" value="ECO:0007669"/>
    <property type="project" value="UniProtKB-KW"/>
</dbReference>
<dbReference type="GO" id="GO:0008242">
    <property type="term" value="F:omega peptidase activity"/>
    <property type="evidence" value="ECO:0007669"/>
    <property type="project" value="InterPro"/>
</dbReference>
<dbReference type="GO" id="GO:0003968">
    <property type="term" value="F:RNA-directed RNA polymerase activity"/>
    <property type="evidence" value="ECO:0007669"/>
    <property type="project" value="InterPro"/>
</dbReference>
<dbReference type="GO" id="GO:0003727">
    <property type="term" value="F:single-stranded RNA binding"/>
    <property type="evidence" value="ECO:0007669"/>
    <property type="project" value="InterPro"/>
</dbReference>
<dbReference type="GO" id="GO:0008270">
    <property type="term" value="F:zinc ion binding"/>
    <property type="evidence" value="ECO:0007669"/>
    <property type="project" value="UniProtKB-KW"/>
</dbReference>
<dbReference type="GO" id="GO:0032259">
    <property type="term" value="P:methylation"/>
    <property type="evidence" value="ECO:0007669"/>
    <property type="project" value="UniProtKB-KW"/>
</dbReference>
<dbReference type="GO" id="GO:0010506">
    <property type="term" value="P:regulation of autophagy"/>
    <property type="evidence" value="ECO:0007669"/>
    <property type="project" value="InterPro"/>
</dbReference>
<dbReference type="GO" id="GO:0097264">
    <property type="term" value="P:self proteolysis"/>
    <property type="evidence" value="ECO:0000315"/>
    <property type="project" value="CACAO"/>
</dbReference>
<dbReference type="GO" id="GO:0039520">
    <property type="term" value="P:symbiont-mediated activation of host autophagy"/>
    <property type="evidence" value="ECO:0007669"/>
    <property type="project" value="UniProtKB-KW"/>
</dbReference>
<dbReference type="GO" id="GO:0039595">
    <property type="term" value="P:symbiont-mediated degradation of host mRNA"/>
    <property type="evidence" value="ECO:0007669"/>
    <property type="project" value="UniProtKB-KW"/>
</dbReference>
<dbReference type="GO" id="GO:0039648">
    <property type="term" value="P:symbiont-mediated perturbation of host ubiquitin-like protein modification"/>
    <property type="evidence" value="ECO:0007669"/>
    <property type="project" value="UniProtKB-KW"/>
</dbReference>
<dbReference type="GO" id="GO:0039548">
    <property type="term" value="P:symbiont-mediated suppression of host cytoplasmic pattern recognition receptor signaling pathway via inhibition of IRF3 activity"/>
    <property type="evidence" value="ECO:0007669"/>
    <property type="project" value="UniProtKB-KW"/>
</dbReference>
<dbReference type="GO" id="GO:0039657">
    <property type="term" value="P:symbiont-mediated suppression of host gene expression"/>
    <property type="evidence" value="ECO:0007669"/>
    <property type="project" value="UniProtKB-KW"/>
</dbReference>
<dbReference type="GO" id="GO:0039579">
    <property type="term" value="P:symbiont-mediated suppression of host ISG15-protein conjugation"/>
    <property type="evidence" value="ECO:0007669"/>
    <property type="project" value="UniProtKB-KW"/>
</dbReference>
<dbReference type="GO" id="GO:0039502">
    <property type="term" value="P:symbiont-mediated suppression of host type I interferon-mediated signaling pathway"/>
    <property type="evidence" value="ECO:0007669"/>
    <property type="project" value="UniProtKB-KW"/>
</dbReference>
<dbReference type="GO" id="GO:0019079">
    <property type="term" value="P:viral genome replication"/>
    <property type="evidence" value="ECO:0007669"/>
    <property type="project" value="InterPro"/>
</dbReference>
<dbReference type="GO" id="GO:0019082">
    <property type="term" value="P:viral protein processing"/>
    <property type="evidence" value="ECO:0007669"/>
    <property type="project" value="InterPro"/>
</dbReference>
<dbReference type="GO" id="GO:0075523">
    <property type="term" value="P:viral translational frameshifting"/>
    <property type="evidence" value="ECO:0007669"/>
    <property type="project" value="UniProtKB-KW"/>
</dbReference>
<dbReference type="CDD" id="cd21901">
    <property type="entry name" value="alpha_betaCoV_Nsp10"/>
    <property type="match status" value="1"/>
</dbReference>
<dbReference type="CDD" id="cd21560">
    <property type="entry name" value="betaCoV-Nsp6"/>
    <property type="match status" value="1"/>
</dbReference>
<dbReference type="CDD" id="cd21519">
    <property type="entry name" value="betaCoV_Nsp2_MHV-like"/>
    <property type="match status" value="1"/>
</dbReference>
<dbReference type="CDD" id="cd21666">
    <property type="entry name" value="betaCoV_Nsp5_Mpro"/>
    <property type="match status" value="1"/>
</dbReference>
<dbReference type="CDD" id="cd21827">
    <property type="entry name" value="betaCoV_Nsp7"/>
    <property type="match status" value="1"/>
</dbReference>
<dbReference type="CDD" id="cd21831">
    <property type="entry name" value="betaCoV_Nsp8"/>
    <property type="match status" value="1"/>
</dbReference>
<dbReference type="CDD" id="cd21898">
    <property type="entry name" value="betaCoV_Nsp9"/>
    <property type="match status" value="1"/>
</dbReference>
<dbReference type="CDD" id="cd21732">
    <property type="entry name" value="betaCoV_PLPro"/>
    <property type="match status" value="1"/>
</dbReference>
<dbReference type="CDD" id="cd21473">
    <property type="entry name" value="cv_Nsp4_TM"/>
    <property type="match status" value="1"/>
</dbReference>
<dbReference type="CDD" id="cd21524">
    <property type="entry name" value="DPUP_MHV_Nsp3"/>
    <property type="match status" value="1"/>
</dbReference>
<dbReference type="CDD" id="cd21557">
    <property type="entry name" value="Macro_X_Nsp3-like"/>
    <property type="match status" value="1"/>
</dbReference>
<dbReference type="CDD" id="cd21879">
    <property type="entry name" value="MHV-like_Nsp1"/>
    <property type="match status" value="1"/>
</dbReference>
<dbReference type="CDD" id="cd21812">
    <property type="entry name" value="MHV-like_Nsp3_betaSM"/>
    <property type="match status" value="1"/>
</dbReference>
<dbReference type="CDD" id="cd21824">
    <property type="entry name" value="MHV-like_Nsp3_NAB"/>
    <property type="match status" value="1"/>
</dbReference>
<dbReference type="CDD" id="cd21714">
    <property type="entry name" value="TM_Y_MHV-like_Nsp3_C"/>
    <property type="match status" value="1"/>
</dbReference>
<dbReference type="CDD" id="cd21467">
    <property type="entry name" value="Ubl1_cv_Nsp3_N-like"/>
    <property type="match status" value="1"/>
</dbReference>
<dbReference type="FunFam" id="1.10.150.420:FF:000001">
    <property type="entry name" value="Replicase polyprotein"/>
    <property type="match status" value="1"/>
</dbReference>
<dbReference type="FunFam" id="1.10.8.1190:FF:000004">
    <property type="entry name" value="Replicase polyprotein 1a"/>
    <property type="match status" value="1"/>
</dbReference>
<dbReference type="FunFam" id="2.40.10.10:FF:000045">
    <property type="entry name" value="Replicase polyprotein 1a"/>
    <property type="match status" value="1"/>
</dbReference>
<dbReference type="FunFam" id="2.40.10.250:FF:000002">
    <property type="entry name" value="Replicase polyprotein 1a"/>
    <property type="match status" value="1"/>
</dbReference>
<dbReference type="FunFam" id="3.40.220.10:FF:000019">
    <property type="entry name" value="Replicase polyprotein 1a"/>
    <property type="match status" value="1"/>
</dbReference>
<dbReference type="FunFam" id="1.10.8.1190:FF:000003">
    <property type="entry name" value="Replicase polyprotein 1ab"/>
    <property type="match status" value="1"/>
</dbReference>
<dbReference type="Gene3D" id="1.10.8.1190">
    <property type="match status" value="2"/>
</dbReference>
<dbReference type="Gene3D" id="2.60.120.1680">
    <property type="match status" value="1"/>
</dbReference>
<dbReference type="Gene3D" id="3.10.20.350">
    <property type="match status" value="1"/>
</dbReference>
<dbReference type="Gene3D" id="3.10.20.540">
    <property type="match status" value="1"/>
</dbReference>
<dbReference type="Gene3D" id="6.10.140.2090">
    <property type="match status" value="1"/>
</dbReference>
<dbReference type="Gene3D" id="1.10.150.420">
    <property type="entry name" value="Coronavirus nonstructural protein 4 C-terminus"/>
    <property type="match status" value="1"/>
</dbReference>
<dbReference type="Gene3D" id="3.40.220.10">
    <property type="entry name" value="Leucine Aminopeptidase, subunit E, domain 1"/>
    <property type="match status" value="1"/>
</dbReference>
<dbReference type="Gene3D" id="1.10.1840.10">
    <property type="entry name" value="main proteinase (3clpro) structure, domain 3"/>
    <property type="match status" value="1"/>
</dbReference>
<dbReference type="Gene3D" id="1.10.8.370">
    <property type="entry name" value="nsp7 replicase"/>
    <property type="match status" value="1"/>
</dbReference>
<dbReference type="Gene3D" id="3.30.70.3540">
    <property type="entry name" value="Nsp8 replicase, head domain"/>
    <property type="match status" value="1"/>
</dbReference>
<dbReference type="Gene3D" id="2.40.10.250">
    <property type="entry name" value="Replicase NSP9"/>
    <property type="match status" value="1"/>
</dbReference>
<dbReference type="Gene3D" id="3.40.50.11020">
    <property type="entry name" value="Replicase polyprotein, nucleic acid-binding domain"/>
    <property type="match status" value="1"/>
</dbReference>
<dbReference type="Gene3D" id="2.40.10.10">
    <property type="entry name" value="Trypsin-like serine proteases"/>
    <property type="match status" value="2"/>
</dbReference>
<dbReference type="InterPro" id="IPR046443">
    <property type="entry name" value="a/bCoV_NSP1_glob"/>
</dbReference>
<dbReference type="InterPro" id="IPR022570">
    <property type="entry name" value="B-CoV_A_NSP1"/>
</dbReference>
<dbReference type="InterPro" id="IPR046442">
    <property type="entry name" value="bCoV_NSP1_C"/>
</dbReference>
<dbReference type="InterPro" id="IPR043613">
    <property type="entry name" value="CoV_NSP2_C"/>
</dbReference>
<dbReference type="InterPro" id="IPR047573">
    <property type="entry name" value="CoV_NSP2_M"/>
</dbReference>
<dbReference type="InterPro" id="IPR049894">
    <property type="entry name" value="COV_NSP3_3ECTO"/>
</dbReference>
<dbReference type="InterPro" id="IPR043611">
    <property type="entry name" value="CoV_NSP3_C"/>
</dbReference>
<dbReference type="InterPro" id="IPR047566">
    <property type="entry name" value="CoV_NSP3_Y"/>
</dbReference>
<dbReference type="InterPro" id="IPR032505">
    <property type="entry name" value="CoV_NSP4_C"/>
</dbReference>
<dbReference type="InterPro" id="IPR043612">
    <property type="entry name" value="CoV_NSP4_N"/>
</dbReference>
<dbReference type="InterPro" id="IPR022733">
    <property type="entry name" value="DPUP_SUD_C_bCoV"/>
</dbReference>
<dbReference type="InterPro" id="IPR002589">
    <property type="entry name" value="Macro_dom"/>
</dbReference>
<dbReference type="InterPro" id="IPR043472">
    <property type="entry name" value="Macro_dom-like"/>
</dbReference>
<dbReference type="InterPro" id="IPR044371">
    <property type="entry name" value="Macro_X_NSP3-like"/>
</dbReference>
<dbReference type="InterPro" id="IPR036333">
    <property type="entry name" value="NSP10_sf_CoV"/>
</dbReference>
<dbReference type="InterPro" id="IPR044384">
    <property type="entry name" value="NSP2_MHV-like"/>
</dbReference>
<dbReference type="InterPro" id="IPR043615">
    <property type="entry name" value="NSP2_N_CoV"/>
</dbReference>
<dbReference type="InterPro" id="IPR044381">
    <property type="entry name" value="NSP3_DPUP_MHV"/>
</dbReference>
<dbReference type="InterPro" id="IPR047567">
    <property type="entry name" value="NSP3_G2M_bCoV"/>
</dbReference>
<dbReference type="InterPro" id="IPR032592">
    <property type="entry name" value="NSP3_NAB_bCoV"/>
</dbReference>
<dbReference type="InterPro" id="IPR042570">
    <property type="entry name" value="NSP3_NAB_bCoV_sf"/>
</dbReference>
<dbReference type="InterPro" id="IPR044357">
    <property type="entry name" value="NSP3_Ubl1_dom_CoV"/>
</dbReference>
<dbReference type="InterPro" id="IPR044353">
    <property type="entry name" value="Nsp3_Ubl2_dom_CoV"/>
</dbReference>
<dbReference type="InterPro" id="IPR038083">
    <property type="entry name" value="NSP3A-like"/>
</dbReference>
<dbReference type="InterPro" id="IPR038123">
    <property type="entry name" value="NSP4_C_sf_CoV"/>
</dbReference>
<dbReference type="InterPro" id="IPR044367">
    <property type="entry name" value="NSP6_betaCoV"/>
</dbReference>
<dbReference type="InterPro" id="IPR043610">
    <property type="entry name" value="NSP6_CoV"/>
</dbReference>
<dbReference type="InterPro" id="IPR014828">
    <property type="entry name" value="NSP7_CoV"/>
</dbReference>
<dbReference type="InterPro" id="IPR037204">
    <property type="entry name" value="NSP7_sf_CoV"/>
</dbReference>
<dbReference type="InterPro" id="IPR014829">
    <property type="entry name" value="NSP8_CoV"/>
</dbReference>
<dbReference type="InterPro" id="IPR037230">
    <property type="entry name" value="NSP8_sf_CoV"/>
</dbReference>
<dbReference type="InterPro" id="IPR014822">
    <property type="entry name" value="NSP9_CoV"/>
</dbReference>
<dbReference type="InterPro" id="IPR036499">
    <property type="entry name" value="NSP9_sf_CoV"/>
</dbReference>
<dbReference type="InterPro" id="IPR002705">
    <property type="entry name" value="Pept_C30/C16_B_coronavir"/>
</dbReference>
<dbReference type="InterPro" id="IPR013016">
    <property type="entry name" value="Peptidase_C16_CoV"/>
</dbReference>
<dbReference type="InterPro" id="IPR008740">
    <property type="entry name" value="Peptidase_C30_CoV"/>
</dbReference>
<dbReference type="InterPro" id="IPR043477">
    <property type="entry name" value="Peptidase_C30_dom3_CoV"/>
</dbReference>
<dbReference type="InterPro" id="IPR009003">
    <property type="entry name" value="Peptidase_S1_PA"/>
</dbReference>
<dbReference type="InterPro" id="IPR043504">
    <property type="entry name" value="Peptidase_S1_PA_chymotrypsin"/>
</dbReference>
<dbReference type="InterPro" id="IPR043177">
    <property type="entry name" value="PLpro_N_sf_CoV"/>
</dbReference>
<dbReference type="InterPro" id="IPR043503">
    <property type="entry name" value="PLpro_palm_finger_dom_CoV"/>
</dbReference>
<dbReference type="InterPro" id="IPR043178">
    <property type="entry name" value="PLpro_thumb_sf_CoV"/>
</dbReference>
<dbReference type="InterPro" id="IPR018995">
    <property type="entry name" value="RNA_synth_NSP10_CoV"/>
</dbReference>
<dbReference type="InterPro" id="IPR029063">
    <property type="entry name" value="SAM-dependent_MTases_sf"/>
</dbReference>
<dbReference type="Pfam" id="PF11963">
    <property type="entry name" value="B-CoV_A_NSP1"/>
    <property type="match status" value="2"/>
</dbReference>
<dbReference type="Pfam" id="PF16251">
    <property type="entry name" value="bCoV_NAB"/>
    <property type="match status" value="1"/>
</dbReference>
<dbReference type="Pfam" id="PF09401">
    <property type="entry name" value="CoV_NSP10"/>
    <property type="match status" value="1"/>
</dbReference>
<dbReference type="Pfam" id="PF19218">
    <property type="entry name" value="CoV_NSP3_C"/>
    <property type="match status" value="1"/>
</dbReference>
<dbReference type="Pfam" id="PF16348">
    <property type="entry name" value="CoV_NSP4_C"/>
    <property type="match status" value="1"/>
</dbReference>
<dbReference type="Pfam" id="PF19217">
    <property type="entry name" value="CoV_NSP4_N"/>
    <property type="match status" value="1"/>
</dbReference>
<dbReference type="Pfam" id="PF19213">
    <property type="entry name" value="CoV_NSP6"/>
    <property type="match status" value="1"/>
</dbReference>
<dbReference type="Pfam" id="PF08716">
    <property type="entry name" value="CoV_NSP7"/>
    <property type="match status" value="1"/>
</dbReference>
<dbReference type="Pfam" id="PF08717">
    <property type="entry name" value="CoV_NSP8"/>
    <property type="match status" value="1"/>
</dbReference>
<dbReference type="Pfam" id="PF08710">
    <property type="entry name" value="CoV_NSP9"/>
    <property type="match status" value="1"/>
</dbReference>
<dbReference type="Pfam" id="PF08715">
    <property type="entry name" value="CoV_peptidase"/>
    <property type="match status" value="1"/>
</dbReference>
<dbReference type="Pfam" id="PF01661">
    <property type="entry name" value="Macro"/>
    <property type="match status" value="1"/>
</dbReference>
<dbReference type="Pfam" id="PF22104">
    <property type="entry name" value="MHV_Nsp3_DPUP"/>
    <property type="match status" value="1"/>
</dbReference>
<dbReference type="Pfam" id="PF01831">
    <property type="entry name" value="Peptidase_C16"/>
    <property type="match status" value="1"/>
</dbReference>
<dbReference type="Pfam" id="PF05409">
    <property type="entry name" value="Peptidase_C30"/>
    <property type="match status" value="1"/>
</dbReference>
<dbReference type="SMART" id="SM00506">
    <property type="entry name" value="A1pp"/>
    <property type="match status" value="1"/>
</dbReference>
<dbReference type="SUPFAM" id="SSF144246">
    <property type="entry name" value="Coronavirus NSP10-like"/>
    <property type="match status" value="1"/>
</dbReference>
<dbReference type="SUPFAM" id="SSF140367">
    <property type="entry name" value="Coronavirus NSP7-like"/>
    <property type="match status" value="1"/>
</dbReference>
<dbReference type="SUPFAM" id="SSF143076">
    <property type="entry name" value="Coronavirus NSP8-like"/>
    <property type="match status" value="1"/>
</dbReference>
<dbReference type="SUPFAM" id="SSF52949">
    <property type="entry name" value="Macro domain-like"/>
    <property type="match status" value="1"/>
</dbReference>
<dbReference type="SUPFAM" id="SSF159936">
    <property type="entry name" value="NSP3A-like"/>
    <property type="match status" value="1"/>
</dbReference>
<dbReference type="SUPFAM" id="SSF101816">
    <property type="entry name" value="Replicase NSP9"/>
    <property type="match status" value="1"/>
</dbReference>
<dbReference type="SUPFAM" id="SSF53335">
    <property type="entry name" value="S-adenosyl-L-methionine-dependent methyltransferases"/>
    <property type="match status" value="1"/>
</dbReference>
<dbReference type="SUPFAM" id="SSF50494">
    <property type="entry name" value="Trypsin-like serine proteases"/>
    <property type="match status" value="1"/>
</dbReference>
<dbReference type="PROSITE" id="PS51963">
    <property type="entry name" value="BCOV_NSP1_C"/>
    <property type="match status" value="1"/>
</dbReference>
<dbReference type="PROSITE" id="PS51942">
    <property type="entry name" value="BCOV_NSP3C_C"/>
    <property type="match status" value="1"/>
</dbReference>
<dbReference type="PROSITE" id="PS51994">
    <property type="entry name" value="BCOV_NSP3E_G2M"/>
    <property type="match status" value="1"/>
</dbReference>
<dbReference type="PROSITE" id="PS51945">
    <property type="entry name" value="BCOV_NSP3E_NAB"/>
    <property type="match status" value="1"/>
</dbReference>
<dbReference type="PROSITE" id="PS51993">
    <property type="entry name" value="COV_3ECTO"/>
    <property type="match status" value="1"/>
</dbReference>
<dbReference type="PROSITE" id="PS51952">
    <property type="entry name" value="COV_EXON_MTASE_COACT"/>
    <property type="match status" value="1"/>
</dbReference>
<dbReference type="PROSITE" id="PS51962">
    <property type="entry name" value="COV_NSP1"/>
    <property type="match status" value="1"/>
</dbReference>
<dbReference type="PROSITE" id="PS51991">
    <property type="entry name" value="COV_NSP2_C"/>
    <property type="match status" value="1"/>
</dbReference>
<dbReference type="PROSITE" id="PS51990">
    <property type="entry name" value="COV_NSP2_M"/>
    <property type="match status" value="1"/>
</dbReference>
<dbReference type="PROSITE" id="PS51989">
    <property type="entry name" value="COV_NSP2_N"/>
    <property type="match status" value="1"/>
</dbReference>
<dbReference type="PROSITE" id="PS51992">
    <property type="entry name" value="COV_NSP3_Y"/>
    <property type="match status" value="1"/>
</dbReference>
<dbReference type="PROSITE" id="PS51943">
    <property type="entry name" value="COV_NSP3A_UBL"/>
    <property type="match status" value="1"/>
</dbReference>
<dbReference type="PROSITE" id="PS51944">
    <property type="entry name" value="COV_NSP3D_UBL"/>
    <property type="match status" value="1"/>
</dbReference>
<dbReference type="PROSITE" id="PS51946">
    <property type="entry name" value="COV_NSP4C"/>
    <property type="match status" value="1"/>
</dbReference>
<dbReference type="PROSITE" id="PS51949">
    <property type="entry name" value="COV_NSP7"/>
    <property type="match status" value="1"/>
</dbReference>
<dbReference type="PROSITE" id="PS51950">
    <property type="entry name" value="COV_NSP8"/>
    <property type="match status" value="1"/>
</dbReference>
<dbReference type="PROSITE" id="PS51951">
    <property type="entry name" value="COV_NSP9_SSRNA_BD"/>
    <property type="match status" value="1"/>
</dbReference>
<dbReference type="PROSITE" id="PS51442">
    <property type="entry name" value="M_PRO"/>
    <property type="match status" value="1"/>
</dbReference>
<dbReference type="PROSITE" id="PS51154">
    <property type="entry name" value="MACRO"/>
    <property type="match status" value="1"/>
</dbReference>
<dbReference type="PROSITE" id="PS51124">
    <property type="entry name" value="PEPTIDASE_C16"/>
    <property type="match status" value="2"/>
</dbReference>